<keyword id="KW-0903">Direct protein sequencing</keyword>
<keyword id="KW-0255">Endonuclease</keyword>
<keyword id="KW-0378">Hydrolase</keyword>
<keyword id="KW-0540">Nuclease</keyword>
<keyword id="KW-1185">Reference proteome</keyword>
<keyword id="KW-0680">Restriction system</keyword>
<protein>
    <recommendedName>
        <fullName evidence="2">Type II restriction enzyme NspV</fullName>
        <shortName evidence="3">R.NspV</shortName>
        <ecNumber>3.1.21.4</ecNumber>
    </recommendedName>
    <alternativeName>
        <fullName>Endonuclease NspV</fullName>
    </alternativeName>
    <alternativeName>
        <fullName>Type-2 restriction enzyme NspV</fullName>
    </alternativeName>
</protein>
<dbReference type="EC" id="3.1.21.4"/>
<dbReference type="EMBL" id="D14719">
    <property type="protein sequence ID" value="BAA03538.1"/>
    <property type="molecule type" value="Genomic_DNA"/>
</dbReference>
<dbReference type="EMBL" id="CP003552">
    <property type="protein sequence ID" value="AFY47112.1"/>
    <property type="molecule type" value="Genomic_DNA"/>
</dbReference>
<dbReference type="RefSeq" id="WP_015137568.1">
    <property type="nucleotide sequence ID" value="NC_019684.1"/>
</dbReference>
<dbReference type="STRING" id="28072.Nos7524_1225"/>
<dbReference type="REBASE" id="1407">
    <property type="entry name" value="NspV"/>
</dbReference>
<dbReference type="REBASE" id="57743">
    <property type="entry name" value="Nsp7524ORF1224P"/>
</dbReference>
<dbReference type="KEGG" id="nop:Nos7524_1225"/>
<dbReference type="PATRIC" id="fig|28072.8.peg.1340"/>
<dbReference type="eggNOG" id="COG0827">
    <property type="taxonomic scope" value="Bacteria"/>
</dbReference>
<dbReference type="HOGENOM" id="CLU_110623_0_0_3"/>
<dbReference type="OrthoDB" id="9796209at2"/>
<dbReference type="BRENDA" id="3.1.21.4">
    <property type="organism ID" value="4371"/>
</dbReference>
<dbReference type="PRO" id="PR:P35677"/>
<dbReference type="Proteomes" id="UP000010378">
    <property type="component" value="Chromosome"/>
</dbReference>
<dbReference type="GO" id="GO:0009036">
    <property type="term" value="F:type II site-specific deoxyribonuclease activity"/>
    <property type="evidence" value="ECO:0007669"/>
    <property type="project" value="UniProtKB-EC"/>
</dbReference>
<dbReference type="GO" id="GO:0009307">
    <property type="term" value="P:DNA restriction-modification system"/>
    <property type="evidence" value="ECO:0007669"/>
    <property type="project" value="UniProtKB-KW"/>
</dbReference>
<organism>
    <name type="scientific">Nostoc sp. (strain ATCC 29411 / PCC 7524)</name>
    <dbReference type="NCBI Taxonomy" id="28072"/>
    <lineage>
        <taxon>Bacteria</taxon>
        <taxon>Bacillati</taxon>
        <taxon>Cyanobacteriota</taxon>
        <taxon>Cyanophyceae</taxon>
        <taxon>Nostocales</taxon>
        <taxon>Nostocaceae</taxon>
        <taxon>Nostoc</taxon>
    </lineage>
</organism>
<accession>P35677</accession>
<accession>K9QQL2</accession>
<proteinExistence type="evidence at protein level"/>
<feature type="initiator methionine" description="Removed" evidence="1">
    <location>
        <position position="1"/>
    </location>
</feature>
<feature type="chain" id="PRO_0000077352" description="Type II restriction enzyme NspV">
    <location>
        <begin position="2"/>
        <end position="220"/>
    </location>
</feature>
<feature type="sequence conflict" description="In Ref. 1; BAA03538." evidence="4" ref="1">
    <original>DEI</original>
    <variation>AIL</variation>
    <location>
        <begin position="175"/>
        <end position="177"/>
    </location>
</feature>
<reference key="1">
    <citation type="journal article" date="1993" name="Nucleic Acids Res.">
        <title>Cloning and expression of the NspV restriction-modification genes of Nostoc sp. strain PCC7524.</title>
        <authorList>
            <person name="Ueno T."/>
            <person name="Ito H."/>
            <person name="Kotani H."/>
            <person name="Nakajima K."/>
        </authorList>
    </citation>
    <scope>NUCLEOTIDE SEQUENCE [GENOMIC DNA]</scope>
    <scope>FUNCTION</scope>
    <scope>PROTEIN SEQUENCE OF N-TERMINUS</scope>
    <source>
        <strain>ATCC 29411 / PCC 7524</strain>
    </source>
</reference>
<reference key="2">
    <citation type="journal article" date="2013" name="Proc. Natl. Acad. Sci. U.S.A.">
        <title>Improving the coverage of the cyanobacterial phylum using diversity-driven genome sequencing.</title>
        <authorList>
            <person name="Shih P.M."/>
            <person name="Wu D."/>
            <person name="Latifi A."/>
            <person name="Axen S.D."/>
            <person name="Fewer D.P."/>
            <person name="Talla E."/>
            <person name="Calteau A."/>
            <person name="Cai F."/>
            <person name="Tandeau de Marsac N."/>
            <person name="Rippka R."/>
            <person name="Herdman M."/>
            <person name="Sivonen K."/>
            <person name="Coursin T."/>
            <person name="Laurent T."/>
            <person name="Goodwin L."/>
            <person name="Nolan M."/>
            <person name="Davenport K.W."/>
            <person name="Han C.S."/>
            <person name="Rubin E.M."/>
            <person name="Eisen J.A."/>
            <person name="Woyke T."/>
            <person name="Gugger M."/>
            <person name="Kerfeld C.A."/>
        </authorList>
    </citation>
    <scope>NUCLEOTIDE SEQUENCE [LARGE SCALE GENOMIC DNA]</scope>
    <source>
        <strain>ATCC 29411 / PCC 7524</strain>
    </source>
</reference>
<reference key="3">
    <citation type="journal article" date="2003" name="Nucleic Acids Res.">
        <title>A nomenclature for restriction enzymes, DNA methyltransferases, homing endonucleases and their genes.</title>
        <authorList>
            <person name="Roberts R.J."/>
            <person name="Belfort M."/>
            <person name="Bestor T."/>
            <person name="Bhagwat A.S."/>
            <person name="Bickle T.A."/>
            <person name="Bitinaite J."/>
            <person name="Blumenthal R.M."/>
            <person name="Degtyarev S.K."/>
            <person name="Dryden D.T."/>
            <person name="Dybvig K."/>
            <person name="Firman K."/>
            <person name="Gromova E.S."/>
            <person name="Gumport R.I."/>
            <person name="Halford S.E."/>
            <person name="Hattman S."/>
            <person name="Heitman J."/>
            <person name="Hornby D.P."/>
            <person name="Janulaitis A."/>
            <person name="Jeltsch A."/>
            <person name="Josephsen J."/>
            <person name="Kiss A."/>
            <person name="Klaenhammer T.R."/>
            <person name="Kobayashi I."/>
            <person name="Kong H."/>
            <person name="Krueger D.H."/>
            <person name="Lacks S."/>
            <person name="Marinus M.G."/>
            <person name="Miyahara M."/>
            <person name="Morgan R.D."/>
            <person name="Murray N.E."/>
            <person name="Nagaraja V."/>
            <person name="Piekarowicz A."/>
            <person name="Pingoud A."/>
            <person name="Raleigh E."/>
            <person name="Rao D.N."/>
            <person name="Reich N."/>
            <person name="Repin V.E."/>
            <person name="Selker E.U."/>
            <person name="Shaw P.C."/>
            <person name="Stein D.C."/>
            <person name="Stoddard B.L."/>
            <person name="Szybalski W."/>
            <person name="Trautner T.A."/>
            <person name="Van Etten J.L."/>
            <person name="Vitor J.M."/>
            <person name="Wilson G.G."/>
            <person name="Xu S.Y."/>
        </authorList>
    </citation>
    <scope>NOMENCLATURE</scope>
    <scope>SUBTYPE</scope>
</reference>
<gene>
    <name evidence="3" type="primary">nspVR</name>
    <name type="ordered locus">Nos7524_1225</name>
</gene>
<name>T2N5_NOSS7</name>
<comment type="function">
    <text evidence="2 5">A P subtype restriction enzyme that recognizes the double-stranded sequence 5'-TTCGAA-3' and cleaves after T-2.</text>
</comment>
<comment type="catalytic activity">
    <reaction>
        <text>Endonucleolytic cleavage of DNA to give specific double-stranded fragments with terminal 5'-phosphates.</text>
        <dbReference type="EC" id="3.1.21.4"/>
    </reaction>
</comment>
<sequence>MTILTIEALRTEAAIFSAAESIHPEPLLYGVTDGKAVGTYIEQKFRLYLKEHYEFVQGNSASGIDFPGLLVDVKVTSIRQPQSSCPFKSARQKIFGLGYSLLIFVYDKIDNSTNRTATLNILHTIYVSAERTADFQMTRGIRNILANEGNKDDLIAFMSDRNLPVDEIEAGNVADEILRNPPMQGFLTISNALQWRLQYGRVIERAGQEDGILTVYRNNP</sequence>
<evidence type="ECO:0000269" key="1">
    <source>
    </source>
</evidence>
<evidence type="ECO:0000303" key="2">
    <source>
    </source>
</evidence>
<evidence type="ECO:0000303" key="3">
    <source>
    </source>
</evidence>
<evidence type="ECO:0000305" key="4"/>
<evidence type="ECO:0000305" key="5">
    <source>
    </source>
</evidence>